<keyword id="KW-1185">Reference proteome</keyword>
<sequence>MKSVISYALYQVQTGSLPVYSSVLTKSPLQLQTVIYRLIVQIQHLNIPSSSSTHSSPF</sequence>
<dbReference type="EMBL" id="AY611627">
    <property type="protein sequence ID" value="AAU14892.1"/>
    <property type="molecule type" value="mRNA"/>
</dbReference>
<dbReference type="EMBL" id="AC015987">
    <property type="status" value="NOT_ANNOTATED_CDS"/>
    <property type="molecule type" value="Genomic_DNA"/>
</dbReference>
<dbReference type="RefSeq" id="NP_001122091.2">
    <property type="nucleotide sequence ID" value="NM_001128619.2"/>
</dbReference>
<dbReference type="BioGRID" id="612785">
    <property type="interactions" value="1"/>
</dbReference>
<dbReference type="STRING" id="9606.ENSP00000468007"/>
<dbReference type="GlyGen" id="Q538Z0">
    <property type="glycosylation" value="1 site, 1 O-linked glycan (1 site)"/>
</dbReference>
<dbReference type="iPTMnet" id="Q538Z0"/>
<dbReference type="PhosphoSitePlus" id="Q538Z0"/>
<dbReference type="BioMuta" id="LUZP6"/>
<dbReference type="PaxDb" id="9606-ENSP00000468007"/>
<dbReference type="DNASU" id="767558"/>
<dbReference type="UCSC" id="uc064iig.1">
    <property type="organism name" value="human"/>
</dbReference>
<dbReference type="AGR" id="HGNC:33955"/>
<dbReference type="GeneCards" id="LUZP6"/>
<dbReference type="HGNC" id="HGNC:33955">
    <property type="gene designation" value="LUZP6"/>
</dbReference>
<dbReference type="MIM" id="611050">
    <property type="type" value="gene"/>
</dbReference>
<dbReference type="neXtProt" id="NX_Q538Z0"/>
<dbReference type="eggNOG" id="ENOG502TDMB">
    <property type="taxonomic scope" value="Eukaryota"/>
</dbReference>
<dbReference type="HOGENOM" id="CLU_211826_0_0_1"/>
<dbReference type="InParanoid" id="Q538Z0"/>
<dbReference type="PAN-GO" id="Q538Z0">
    <property type="GO annotations" value="0 GO annotations based on evolutionary models"/>
</dbReference>
<dbReference type="PathwayCommons" id="Q538Z0"/>
<dbReference type="BioGRID-ORCS" id="767558">
    <property type="hits" value="13 hits in 982 CRISPR screens"/>
</dbReference>
<dbReference type="ChiTaRS" id="LUZP6">
    <property type="organism name" value="human"/>
</dbReference>
<dbReference type="GenomeRNAi" id="767558"/>
<dbReference type="Pharos" id="Q538Z0">
    <property type="development level" value="Tdark"/>
</dbReference>
<dbReference type="PRO" id="PR:Q538Z0"/>
<dbReference type="Proteomes" id="UP000005640">
    <property type="component" value="Unplaced"/>
</dbReference>
<dbReference type="RNAct" id="Q538Z0">
    <property type="molecule type" value="protein"/>
</dbReference>
<organism>
    <name type="scientific">Homo sapiens</name>
    <name type="common">Human</name>
    <dbReference type="NCBI Taxonomy" id="9606"/>
    <lineage>
        <taxon>Eukaryota</taxon>
        <taxon>Metazoa</taxon>
        <taxon>Chordata</taxon>
        <taxon>Craniata</taxon>
        <taxon>Vertebrata</taxon>
        <taxon>Euteleostomi</taxon>
        <taxon>Mammalia</taxon>
        <taxon>Eutheria</taxon>
        <taxon>Euarchontoglires</taxon>
        <taxon>Primates</taxon>
        <taxon>Haplorrhini</taxon>
        <taxon>Catarrhini</taxon>
        <taxon>Hominidae</taxon>
        <taxon>Homo</taxon>
    </lineage>
</organism>
<protein>
    <recommendedName>
        <fullName>Leucine zipper protein 6</fullName>
    </recommendedName>
    <alternativeName>
        <fullName>Myeloproliferative disease-associated 6 kDa antigen</fullName>
    </alternativeName>
</protein>
<comment type="tissue specificity">
    <text evidence="1">Widely expressed, highest levels found in brain, placenta, spleen, testis, and ovary. Up-regulated in some tumor cells.</text>
</comment>
<comment type="induction">
    <text evidence="1">By IFNA1.</text>
</comment>
<comment type="miscellaneous">
    <text>Elicits IgG antibody response in a subset of polycythemia vera patients and as well in patients with chronic myelogenous leukemia and prostate cancer receiving IFNA1 or other therapy, suggesting that it is broadly immunogenic.</text>
</comment>
<comment type="miscellaneous">
    <text>This protein is produced by a bicistronic gene which also produces the MTPN protein from a non-overlapping reading frame. LUZP6 belongs to a group of cryptic antigens without conventional genomic structure. It is encoded by a cryptic open reading frame located in the 3'-untranslated region of MTPN that is expressed following IRES-mediated alternative initiation of translation at a AUU start codon.</text>
</comment>
<accession>Q538Z0</accession>
<accession>K7EQW5</accession>
<name>LUZP6_HUMAN</name>
<evidence type="ECO:0000269" key="1">
    <source>
    </source>
</evidence>
<reference key="1">
    <citation type="journal article" date="2006" name="J. Immunol.">
        <title>An unconventional antigen translated by a novel internal ribosome entry site elicits antitumor humoral immune reactions.</title>
        <authorList>
            <person name="Xiong Z."/>
            <person name="Liu E."/>
            <person name="Yan Y."/>
            <person name="Silver R.T."/>
            <person name="Yang F."/>
            <person name="Chen I.H."/>
            <person name="Chen Y."/>
            <person name="Verstovsek S."/>
            <person name="Wang H."/>
            <person name="Prchal J."/>
            <person name="Yang X.-F."/>
        </authorList>
    </citation>
    <scope>NUCLEOTIDE SEQUENCE [MRNA]</scope>
    <scope>SYNTHESIS OF 39-58</scope>
    <scope>TISSUE SPECIFICITY</scope>
    <scope>INDUCTION</scope>
    <scope>IDENTIFICATION AS A CANCER ANTIGEN</scope>
    <source>
        <tissue>Testis</tissue>
    </source>
</reference>
<reference key="2">
    <citation type="journal article" date="2018" name="O. J. Mod. Neurosurg.">
        <title>MALDI-TOF mass spectrometric analysis of brain tumor cyst fluid reveals a protein peak corresponding to ApoC1 and LuzP6.</title>
        <authorList>
            <person name="Groll M."/>
            <person name="Frenzel J."/>
            <person name="Krause M."/>
            <person name="Schaenzer A."/>
            <person name="Mueller W."/>
            <person name="Eschrich K."/>
            <person name="Nestler U."/>
        </authorList>
    </citation>
    <scope>IDENTIFICATION BY MASS SPECTROMETRY</scope>
</reference>
<gene>
    <name type="primary">LUZP6</name>
    <name type="synonym">MPD6</name>
</gene>
<feature type="chain" id="PRO_0000318578" description="Leucine zipper protein 6">
    <location>
        <begin position="1"/>
        <end position="58"/>
    </location>
</feature>
<proteinExistence type="evidence at protein level"/>